<name>Y2191_ARCFU</name>
<feature type="chain" id="PRO_0000128117" description="Uncharacterized protein AF_2191">
    <location>
        <begin position="1"/>
        <end position="125"/>
    </location>
</feature>
<feature type="transmembrane region" description="Helical" evidence="1">
    <location>
        <begin position="21"/>
        <end position="43"/>
    </location>
</feature>
<gene>
    <name type="ordered locus">AF_2191</name>
</gene>
<proteinExistence type="predicted"/>
<keyword id="KW-0472">Membrane</keyword>
<keyword id="KW-1185">Reference proteome</keyword>
<keyword id="KW-0812">Transmembrane</keyword>
<keyword id="KW-1133">Transmembrane helix</keyword>
<reference key="1">
    <citation type="journal article" date="1997" name="Nature">
        <title>The complete genome sequence of the hyperthermophilic, sulphate-reducing archaeon Archaeoglobus fulgidus.</title>
        <authorList>
            <person name="Klenk H.-P."/>
            <person name="Clayton R.A."/>
            <person name="Tomb J.-F."/>
            <person name="White O."/>
            <person name="Nelson K.E."/>
            <person name="Ketchum K.A."/>
            <person name="Dodson R.J."/>
            <person name="Gwinn M.L."/>
            <person name="Hickey E.K."/>
            <person name="Peterson J.D."/>
            <person name="Richardson D.L."/>
            <person name="Kerlavage A.R."/>
            <person name="Graham D.E."/>
            <person name="Kyrpides N.C."/>
            <person name="Fleischmann R.D."/>
            <person name="Quackenbush J."/>
            <person name="Lee N.H."/>
            <person name="Sutton G.G."/>
            <person name="Gill S.R."/>
            <person name="Kirkness E.F."/>
            <person name="Dougherty B.A."/>
            <person name="McKenney K."/>
            <person name="Adams M.D."/>
            <person name="Loftus B.J."/>
            <person name="Peterson S.N."/>
            <person name="Reich C.I."/>
            <person name="McNeil L.K."/>
            <person name="Badger J.H."/>
            <person name="Glodek A."/>
            <person name="Zhou L."/>
            <person name="Overbeek R."/>
            <person name="Gocayne J.D."/>
            <person name="Weidman J.F."/>
            <person name="McDonald L.A."/>
            <person name="Utterback T.R."/>
            <person name="Cotton M.D."/>
            <person name="Spriggs T."/>
            <person name="Artiach P."/>
            <person name="Kaine B.P."/>
            <person name="Sykes S.M."/>
            <person name="Sadow P.W."/>
            <person name="D'Andrea K.P."/>
            <person name="Bowman C."/>
            <person name="Fujii C."/>
            <person name="Garland S.A."/>
            <person name="Mason T.M."/>
            <person name="Olsen G.J."/>
            <person name="Fraser C.M."/>
            <person name="Smith H.O."/>
            <person name="Woese C.R."/>
            <person name="Venter J.C."/>
        </authorList>
    </citation>
    <scope>NUCLEOTIDE SEQUENCE [LARGE SCALE GENOMIC DNA]</scope>
    <source>
        <strain>ATCC 49558 / DSM 4304 / JCM 9628 / NBRC 100126 / VC-16</strain>
    </source>
</reference>
<protein>
    <recommendedName>
        <fullName>Uncharacterized protein AF_2191</fullName>
    </recommendedName>
</protein>
<dbReference type="EMBL" id="AE000782">
    <property type="protein sequence ID" value="AAB89074.1"/>
    <property type="molecule type" value="Genomic_DNA"/>
</dbReference>
<dbReference type="PIR" id="G69523">
    <property type="entry name" value="G69523"/>
</dbReference>
<dbReference type="SMR" id="O28092"/>
<dbReference type="STRING" id="224325.AF_2191"/>
<dbReference type="PaxDb" id="224325-AF_2191"/>
<dbReference type="EnsemblBacteria" id="AAB89074">
    <property type="protein sequence ID" value="AAB89074"/>
    <property type="gene ID" value="AF_2191"/>
</dbReference>
<dbReference type="KEGG" id="afu:AF_2191"/>
<dbReference type="eggNOG" id="arCOG10396">
    <property type="taxonomic scope" value="Archaea"/>
</dbReference>
<dbReference type="HOGENOM" id="CLU_2177749_0_0_2"/>
<dbReference type="Proteomes" id="UP000002199">
    <property type="component" value="Chromosome"/>
</dbReference>
<dbReference type="GO" id="GO:0005886">
    <property type="term" value="C:plasma membrane"/>
    <property type="evidence" value="ECO:0007669"/>
    <property type="project" value="InterPro"/>
</dbReference>
<dbReference type="GO" id="GO:0020037">
    <property type="term" value="F:heme binding"/>
    <property type="evidence" value="ECO:0007669"/>
    <property type="project" value="InterPro"/>
</dbReference>
<dbReference type="GO" id="GO:0017004">
    <property type="term" value="P:cytochrome complex assembly"/>
    <property type="evidence" value="ECO:0007669"/>
    <property type="project" value="InterPro"/>
</dbReference>
<dbReference type="Gene3D" id="2.40.50.140">
    <property type="entry name" value="Nucleic acid-binding proteins"/>
    <property type="match status" value="1"/>
</dbReference>
<dbReference type="InterPro" id="IPR004329">
    <property type="entry name" value="CcmE"/>
</dbReference>
<dbReference type="InterPro" id="IPR036127">
    <property type="entry name" value="CcmE-like_sf"/>
</dbReference>
<dbReference type="InterPro" id="IPR012340">
    <property type="entry name" value="NA-bd_OB-fold"/>
</dbReference>
<dbReference type="Pfam" id="PF03100">
    <property type="entry name" value="CcmE"/>
    <property type="match status" value="1"/>
</dbReference>
<dbReference type="SUPFAM" id="SSF82093">
    <property type="entry name" value="Heme chaperone CcmE"/>
    <property type="match status" value="1"/>
</dbReference>
<accession>O28092</accession>
<sequence length="125" mass="13623">MLYGRIFFNSGVQLLSMADKKFSLIALVSFTALAIIVLYHNISPYLTPSDLIAQGKAENVQVVGKIVSVNGNTFQLSDGKNTITAVYNGTVQRYDAEVVVVGNWDGKVLHATKVLQKCHTEYKGG</sequence>
<organism>
    <name type="scientific">Archaeoglobus fulgidus (strain ATCC 49558 / DSM 4304 / JCM 9628 / NBRC 100126 / VC-16)</name>
    <dbReference type="NCBI Taxonomy" id="224325"/>
    <lineage>
        <taxon>Archaea</taxon>
        <taxon>Methanobacteriati</taxon>
        <taxon>Methanobacteriota</taxon>
        <taxon>Archaeoglobi</taxon>
        <taxon>Archaeoglobales</taxon>
        <taxon>Archaeoglobaceae</taxon>
        <taxon>Archaeoglobus</taxon>
    </lineage>
</organism>
<comment type="subcellular location">
    <subcellularLocation>
        <location evidence="2">Membrane</location>
        <topology evidence="2">Single-pass membrane protein</topology>
    </subcellularLocation>
</comment>
<evidence type="ECO:0000255" key="1"/>
<evidence type="ECO:0000305" key="2"/>